<keyword id="KW-0028">Amino-acid biosynthesis</keyword>
<keyword id="KW-0067">ATP-binding</keyword>
<keyword id="KW-0963">Cytoplasm</keyword>
<keyword id="KW-0418">Kinase</keyword>
<keyword id="KW-0547">Nucleotide-binding</keyword>
<keyword id="KW-0791">Threonine biosynthesis</keyword>
<keyword id="KW-0808">Transferase</keyword>
<feature type="chain" id="PRO_1000049137" description="Homoserine kinase">
    <location>
        <begin position="1"/>
        <end position="309"/>
    </location>
</feature>
<feature type="binding site" evidence="1">
    <location>
        <begin position="91"/>
        <end position="101"/>
    </location>
    <ligand>
        <name>ATP</name>
        <dbReference type="ChEBI" id="CHEBI:30616"/>
    </ligand>
</feature>
<organism>
    <name type="scientific">Klebsiella pneumoniae subsp. pneumoniae (strain ATCC 700721 / MGH 78578)</name>
    <dbReference type="NCBI Taxonomy" id="272620"/>
    <lineage>
        <taxon>Bacteria</taxon>
        <taxon>Pseudomonadati</taxon>
        <taxon>Pseudomonadota</taxon>
        <taxon>Gammaproteobacteria</taxon>
        <taxon>Enterobacterales</taxon>
        <taxon>Enterobacteriaceae</taxon>
        <taxon>Klebsiella/Raoultella group</taxon>
        <taxon>Klebsiella</taxon>
        <taxon>Klebsiella pneumoniae complex</taxon>
    </lineage>
</organism>
<name>KHSE_KLEP7</name>
<evidence type="ECO:0000255" key="1">
    <source>
        <dbReference type="HAMAP-Rule" id="MF_00384"/>
    </source>
</evidence>
<gene>
    <name evidence="1" type="primary">thrB</name>
    <name type="ordered locus">KPN78578_00030</name>
    <name type="ORF">KPN_00003</name>
</gene>
<dbReference type="EC" id="2.7.1.39" evidence="1"/>
<dbReference type="EMBL" id="CP000647">
    <property type="protein sequence ID" value="ABR75464.1"/>
    <property type="molecule type" value="Genomic_DNA"/>
</dbReference>
<dbReference type="RefSeq" id="WP_002887853.1">
    <property type="nucleotide sequence ID" value="NC_009648.1"/>
</dbReference>
<dbReference type="SMR" id="A6T4E3"/>
<dbReference type="STRING" id="272620.KPN_00003"/>
<dbReference type="PaxDb" id="272620-KPN_00003"/>
<dbReference type="EnsemblBacteria" id="ABR75464">
    <property type="protein sequence ID" value="ABR75464"/>
    <property type="gene ID" value="KPN_00003"/>
</dbReference>
<dbReference type="GeneID" id="93252193"/>
<dbReference type="KEGG" id="kpn:KPN_00003"/>
<dbReference type="HOGENOM" id="CLU_041243_1_1_6"/>
<dbReference type="UniPathway" id="UPA00050">
    <property type="reaction ID" value="UER00064"/>
</dbReference>
<dbReference type="Proteomes" id="UP000000265">
    <property type="component" value="Chromosome"/>
</dbReference>
<dbReference type="GO" id="GO:0005737">
    <property type="term" value="C:cytoplasm"/>
    <property type="evidence" value="ECO:0007669"/>
    <property type="project" value="UniProtKB-SubCell"/>
</dbReference>
<dbReference type="GO" id="GO:0005524">
    <property type="term" value="F:ATP binding"/>
    <property type="evidence" value="ECO:0007669"/>
    <property type="project" value="UniProtKB-UniRule"/>
</dbReference>
<dbReference type="GO" id="GO:0004413">
    <property type="term" value="F:homoserine kinase activity"/>
    <property type="evidence" value="ECO:0007669"/>
    <property type="project" value="UniProtKB-UniRule"/>
</dbReference>
<dbReference type="GO" id="GO:0009088">
    <property type="term" value="P:threonine biosynthetic process"/>
    <property type="evidence" value="ECO:0007669"/>
    <property type="project" value="UniProtKB-UniRule"/>
</dbReference>
<dbReference type="FunFam" id="3.30.230.10:FF:000020">
    <property type="entry name" value="Homoserine kinase"/>
    <property type="match status" value="1"/>
</dbReference>
<dbReference type="FunFam" id="3.30.70.890:FF:000002">
    <property type="entry name" value="Homoserine kinase"/>
    <property type="match status" value="1"/>
</dbReference>
<dbReference type="Gene3D" id="3.30.230.10">
    <property type="match status" value="1"/>
</dbReference>
<dbReference type="Gene3D" id="3.30.70.890">
    <property type="entry name" value="GHMP kinase, C-terminal domain"/>
    <property type="match status" value="1"/>
</dbReference>
<dbReference type="HAMAP" id="MF_00384">
    <property type="entry name" value="Homoser_kinase"/>
    <property type="match status" value="1"/>
</dbReference>
<dbReference type="InterPro" id="IPR013750">
    <property type="entry name" value="GHMP_kinase_C_dom"/>
</dbReference>
<dbReference type="InterPro" id="IPR036554">
    <property type="entry name" value="GHMP_kinase_C_sf"/>
</dbReference>
<dbReference type="InterPro" id="IPR006204">
    <property type="entry name" value="GHMP_kinase_N_dom"/>
</dbReference>
<dbReference type="InterPro" id="IPR006203">
    <property type="entry name" value="GHMP_knse_ATP-bd_CS"/>
</dbReference>
<dbReference type="InterPro" id="IPR000870">
    <property type="entry name" value="Homoserine_kinase"/>
</dbReference>
<dbReference type="InterPro" id="IPR020568">
    <property type="entry name" value="Ribosomal_Su5_D2-typ_SF"/>
</dbReference>
<dbReference type="InterPro" id="IPR014721">
    <property type="entry name" value="Ribsml_uS5_D2-typ_fold_subgr"/>
</dbReference>
<dbReference type="NCBIfam" id="NF002288">
    <property type="entry name" value="PRK01212.1-4"/>
    <property type="match status" value="1"/>
</dbReference>
<dbReference type="NCBIfam" id="TIGR00191">
    <property type="entry name" value="thrB"/>
    <property type="match status" value="1"/>
</dbReference>
<dbReference type="PANTHER" id="PTHR20861:SF1">
    <property type="entry name" value="HOMOSERINE KINASE"/>
    <property type="match status" value="1"/>
</dbReference>
<dbReference type="PANTHER" id="PTHR20861">
    <property type="entry name" value="HOMOSERINE/4-DIPHOSPHOCYTIDYL-2-C-METHYL-D-ERYTHRITOL KINASE"/>
    <property type="match status" value="1"/>
</dbReference>
<dbReference type="Pfam" id="PF08544">
    <property type="entry name" value="GHMP_kinases_C"/>
    <property type="match status" value="1"/>
</dbReference>
<dbReference type="Pfam" id="PF00288">
    <property type="entry name" value="GHMP_kinases_N"/>
    <property type="match status" value="1"/>
</dbReference>
<dbReference type="PIRSF" id="PIRSF000676">
    <property type="entry name" value="Homoser_kin"/>
    <property type="match status" value="1"/>
</dbReference>
<dbReference type="PRINTS" id="PR00958">
    <property type="entry name" value="HOMSERKINASE"/>
</dbReference>
<dbReference type="SUPFAM" id="SSF55060">
    <property type="entry name" value="GHMP Kinase, C-terminal domain"/>
    <property type="match status" value="1"/>
</dbReference>
<dbReference type="SUPFAM" id="SSF54211">
    <property type="entry name" value="Ribosomal protein S5 domain 2-like"/>
    <property type="match status" value="1"/>
</dbReference>
<dbReference type="PROSITE" id="PS00627">
    <property type="entry name" value="GHMP_KINASES_ATP"/>
    <property type="match status" value="1"/>
</dbReference>
<protein>
    <recommendedName>
        <fullName evidence="1">Homoserine kinase</fullName>
        <shortName evidence="1">HK</shortName>
        <shortName evidence="1">HSK</shortName>
        <ecNumber evidence="1">2.7.1.39</ecNumber>
    </recommendedName>
</protein>
<proteinExistence type="inferred from homology"/>
<comment type="function">
    <text evidence="1">Catalyzes the ATP-dependent phosphorylation of L-homoserine to L-homoserine phosphate.</text>
</comment>
<comment type="catalytic activity">
    <reaction evidence="1">
        <text>L-homoserine + ATP = O-phospho-L-homoserine + ADP + H(+)</text>
        <dbReference type="Rhea" id="RHEA:13985"/>
        <dbReference type="ChEBI" id="CHEBI:15378"/>
        <dbReference type="ChEBI" id="CHEBI:30616"/>
        <dbReference type="ChEBI" id="CHEBI:57476"/>
        <dbReference type="ChEBI" id="CHEBI:57590"/>
        <dbReference type="ChEBI" id="CHEBI:456216"/>
        <dbReference type="EC" id="2.7.1.39"/>
    </reaction>
</comment>
<comment type="pathway">
    <text evidence="1">Amino-acid biosynthesis; L-threonine biosynthesis; L-threonine from L-aspartate: step 4/5.</text>
</comment>
<comment type="subcellular location">
    <subcellularLocation>
        <location evidence="1">Cytoplasm</location>
    </subcellularLocation>
</comment>
<comment type="similarity">
    <text evidence="1">Belongs to the GHMP kinase family. Homoserine kinase subfamily.</text>
</comment>
<reference key="1">
    <citation type="submission" date="2006-09" db="EMBL/GenBank/DDBJ databases">
        <authorList>
            <consortium name="The Klebsiella pneumonia Genome Sequencing Project"/>
            <person name="McClelland M."/>
            <person name="Sanderson E.K."/>
            <person name="Spieth J."/>
            <person name="Clifton W.S."/>
            <person name="Latreille P."/>
            <person name="Sabo A."/>
            <person name="Pepin K."/>
            <person name="Bhonagiri V."/>
            <person name="Porwollik S."/>
            <person name="Ali J."/>
            <person name="Wilson R.K."/>
        </authorList>
    </citation>
    <scope>NUCLEOTIDE SEQUENCE [LARGE SCALE GENOMIC DNA]</scope>
    <source>
        <strain>ATCC 700721 / MGH 78578</strain>
    </source>
</reference>
<sequence>MVKVYAPASSANMSVGFDVLGAAVTPVDGTLLGDNVTVEAAEQFSLQNLGRFASKLPTAPQENIVYQCWESFCREIGKTVPVAMTLEKNMPIGSGLGSSACSVVAALVAMNEFCGKPLNETRMLALMGEMEGRISGSIHYDNVAPCYLGGMQLMIEENGIISQQVPGFDEWLWVLAYPGIKVSTAEARAILPAQYRRQDCIAHGRHLAGFIHACYTRQPQLAAKLMKDVIAEPYRTKLLPGFSEARQAAMEMGAQACGISGSGPTLFALCDKPDTAQRVADWLGAHYLQNQEGFVHICRLDTAGARVVG</sequence>
<accession>A6T4E3</accession>